<gene>
    <name evidence="1" type="primary">rpl36</name>
</gene>
<keyword id="KW-0150">Chloroplast</keyword>
<keyword id="KW-0934">Plastid</keyword>
<keyword id="KW-0687">Ribonucleoprotein</keyword>
<keyword id="KW-0689">Ribosomal protein</keyword>
<geneLocation type="chloroplast"/>
<protein>
    <recommendedName>
        <fullName evidence="1">Large ribosomal subunit protein bL36c</fullName>
    </recommendedName>
    <alternativeName>
        <fullName evidence="2">50S ribosomal protein L36, chloroplastic</fullName>
    </alternativeName>
</protein>
<comment type="subcellular location">
    <subcellularLocation>
        <location>Plastid</location>
        <location>Chloroplast</location>
    </subcellularLocation>
</comment>
<comment type="similarity">
    <text evidence="1">Belongs to the bacterial ribosomal protein bL36 family.</text>
</comment>
<reference key="1">
    <citation type="journal article" date="2006" name="Transgenic Res.">
        <title>Efficient and stable transformation of Lactuca sativa L. cv. Cisco (lettuce) plastids.</title>
        <authorList>
            <person name="Kanamoto H."/>
            <person name="Yamashita A."/>
            <person name="Asao H."/>
            <person name="Okumura S."/>
            <person name="Takase H."/>
            <person name="Hattori M."/>
            <person name="Yokota A."/>
            <person name="Tomizawa K."/>
        </authorList>
    </citation>
    <scope>NUCLEOTIDE SEQUENCE [LARGE SCALE GENOMIC DNA]</scope>
    <source>
        <strain>cv. Cisco</strain>
    </source>
</reference>
<reference key="2">
    <citation type="submission" date="2006-01" db="EMBL/GenBank/DDBJ databases">
        <title>A comparison of the first two published chloroplast genomes in Asteraceae: Lactuca and Helianthus.</title>
        <authorList>
            <person name="Timme R.E."/>
            <person name="Kuehl J.V."/>
            <person name="Boore J.L."/>
            <person name="Jansen R.K."/>
        </authorList>
    </citation>
    <scope>NUCLEOTIDE SEQUENCE [LARGE SCALE GENOMIC DNA]</scope>
    <source>
        <strain>cv. Salinas</strain>
    </source>
</reference>
<evidence type="ECO:0000255" key="1">
    <source>
        <dbReference type="HAMAP-Rule" id="MF_00251"/>
    </source>
</evidence>
<evidence type="ECO:0000305" key="2"/>
<dbReference type="EMBL" id="AP007232">
    <property type="protein sequence ID" value="BAE47629.1"/>
    <property type="molecule type" value="Genomic_DNA"/>
</dbReference>
<dbReference type="EMBL" id="DQ383816">
    <property type="protein sequence ID" value="ABD47266.1"/>
    <property type="molecule type" value="Genomic_DNA"/>
</dbReference>
<dbReference type="RefSeq" id="YP_398362.1">
    <property type="nucleotide sequence ID" value="NC_007578.1"/>
</dbReference>
<dbReference type="SMR" id="Q332U3"/>
<dbReference type="GeneID" id="3772821"/>
<dbReference type="KEGG" id="lsv:3772821"/>
<dbReference type="GO" id="GO:0009507">
    <property type="term" value="C:chloroplast"/>
    <property type="evidence" value="ECO:0007669"/>
    <property type="project" value="UniProtKB-SubCell"/>
</dbReference>
<dbReference type="GO" id="GO:1990904">
    <property type="term" value="C:ribonucleoprotein complex"/>
    <property type="evidence" value="ECO:0007669"/>
    <property type="project" value="UniProtKB-KW"/>
</dbReference>
<dbReference type="GO" id="GO:0005840">
    <property type="term" value="C:ribosome"/>
    <property type="evidence" value="ECO:0007669"/>
    <property type="project" value="UniProtKB-KW"/>
</dbReference>
<dbReference type="GO" id="GO:0003735">
    <property type="term" value="F:structural constituent of ribosome"/>
    <property type="evidence" value="ECO:0007669"/>
    <property type="project" value="InterPro"/>
</dbReference>
<dbReference type="GO" id="GO:0006412">
    <property type="term" value="P:translation"/>
    <property type="evidence" value="ECO:0007669"/>
    <property type="project" value="UniProtKB-UniRule"/>
</dbReference>
<dbReference type="HAMAP" id="MF_00251">
    <property type="entry name" value="Ribosomal_bL36"/>
    <property type="match status" value="1"/>
</dbReference>
<dbReference type="InterPro" id="IPR000473">
    <property type="entry name" value="Ribosomal_bL36"/>
</dbReference>
<dbReference type="InterPro" id="IPR035977">
    <property type="entry name" value="Ribosomal_bL36_sp"/>
</dbReference>
<dbReference type="NCBIfam" id="TIGR01022">
    <property type="entry name" value="rpmJ_bact"/>
    <property type="match status" value="1"/>
</dbReference>
<dbReference type="PANTHER" id="PTHR42888">
    <property type="entry name" value="50S RIBOSOMAL PROTEIN L36, CHLOROPLASTIC"/>
    <property type="match status" value="1"/>
</dbReference>
<dbReference type="PANTHER" id="PTHR42888:SF1">
    <property type="entry name" value="LARGE RIBOSOMAL SUBUNIT PROTEIN BL36C"/>
    <property type="match status" value="1"/>
</dbReference>
<dbReference type="Pfam" id="PF00444">
    <property type="entry name" value="Ribosomal_L36"/>
    <property type="match status" value="1"/>
</dbReference>
<dbReference type="SUPFAM" id="SSF57840">
    <property type="entry name" value="Ribosomal protein L36"/>
    <property type="match status" value="1"/>
</dbReference>
<dbReference type="PROSITE" id="PS00828">
    <property type="entry name" value="RIBOSOMAL_L36"/>
    <property type="match status" value="1"/>
</dbReference>
<feature type="chain" id="PRO_0000276821" description="Large ribosomal subunit protein bL36c">
    <location>
        <begin position="1"/>
        <end position="37"/>
    </location>
</feature>
<proteinExistence type="inferred from homology"/>
<organism>
    <name type="scientific">Lactuca sativa</name>
    <name type="common">Garden lettuce</name>
    <dbReference type="NCBI Taxonomy" id="4236"/>
    <lineage>
        <taxon>Eukaryota</taxon>
        <taxon>Viridiplantae</taxon>
        <taxon>Streptophyta</taxon>
        <taxon>Embryophyta</taxon>
        <taxon>Tracheophyta</taxon>
        <taxon>Spermatophyta</taxon>
        <taxon>Magnoliopsida</taxon>
        <taxon>eudicotyledons</taxon>
        <taxon>Gunneridae</taxon>
        <taxon>Pentapetalae</taxon>
        <taxon>asterids</taxon>
        <taxon>campanulids</taxon>
        <taxon>Asterales</taxon>
        <taxon>Asteraceae</taxon>
        <taxon>Cichorioideae</taxon>
        <taxon>Cichorieae</taxon>
        <taxon>Lactucinae</taxon>
        <taxon>Lactuca</taxon>
    </lineage>
</organism>
<sequence length="37" mass="4503">MKIRASVRKICEKCRLIRRRGRIRVICSNPRHKQRQG</sequence>
<name>RK36_LACSA</name>
<accession>Q332U3</accession>